<gene>
    <name type="primary">nhr-71</name>
    <name type="ORF">K11E4.5</name>
</gene>
<proteinExistence type="evidence at transcript level"/>
<dbReference type="EMBL" id="AF273824">
    <property type="protein sequence ID" value="AAG15173.1"/>
    <property type="molecule type" value="mRNA"/>
</dbReference>
<dbReference type="EMBL" id="AF273825">
    <property type="protein sequence ID" value="AAG15174.1"/>
    <property type="molecule type" value="mRNA"/>
</dbReference>
<dbReference type="EMBL" id="Z70211">
    <property type="protein sequence ID" value="CAA94160.3"/>
    <property type="status" value="ALT_INIT"/>
    <property type="molecule type" value="Genomic_DNA"/>
</dbReference>
<dbReference type="EMBL" id="Z81550">
    <property type="protein sequence ID" value="CAA94160.3"/>
    <property type="status" value="JOINED"/>
    <property type="molecule type" value="Genomic_DNA"/>
</dbReference>
<dbReference type="EMBL" id="Z70211">
    <property type="protein sequence ID" value="CAH60769.1"/>
    <property type="status" value="ALT_INIT"/>
    <property type="molecule type" value="Genomic_DNA"/>
</dbReference>
<dbReference type="EMBL" id="Z81550">
    <property type="protein sequence ID" value="CAH60769.1"/>
    <property type="status" value="JOINED"/>
    <property type="molecule type" value="Genomic_DNA"/>
</dbReference>
<dbReference type="PIR" id="B89694">
    <property type="entry name" value="B89694"/>
</dbReference>
<dbReference type="PIR" id="T22740">
    <property type="entry name" value="T22740"/>
</dbReference>
<dbReference type="RefSeq" id="NP_001024787.1">
    <property type="nucleotide sequence ID" value="NM_001029616.4"/>
</dbReference>
<dbReference type="RefSeq" id="NP_001024788.1">
    <property type="nucleotide sequence ID" value="NM_001029617.2"/>
</dbReference>
<dbReference type="BioGRID" id="46392">
    <property type="interactions" value="3"/>
</dbReference>
<dbReference type="DIP" id="DIP-27345N"/>
<dbReference type="FunCoup" id="Q9GTD4">
    <property type="interactions" value="659"/>
</dbReference>
<dbReference type="IntAct" id="Q9GTD4">
    <property type="interactions" value="3"/>
</dbReference>
<dbReference type="STRING" id="6239.K11E4.5b.1"/>
<dbReference type="PaxDb" id="6239-K11E4.5b"/>
<dbReference type="PeptideAtlas" id="Q9GTD4"/>
<dbReference type="EnsemblMetazoa" id="K11E4.5a.1">
    <property type="protein sequence ID" value="K11E4.5a.1"/>
    <property type="gene ID" value="WBGene00003661"/>
</dbReference>
<dbReference type="EnsemblMetazoa" id="K11E4.5b.1">
    <property type="protein sequence ID" value="K11E4.5b.1"/>
    <property type="gene ID" value="WBGene00003661"/>
</dbReference>
<dbReference type="GeneID" id="181491"/>
<dbReference type="KEGG" id="cel:CELE_K11E4.5"/>
<dbReference type="UCSC" id="K11E4.5a">
    <molecule id="Q9GTD4-1"/>
    <property type="organism name" value="c. elegans"/>
</dbReference>
<dbReference type="AGR" id="WB:WBGene00003661"/>
<dbReference type="CTD" id="181491"/>
<dbReference type="WormBase" id="K11E4.5a">
    <property type="protein sequence ID" value="CE28244"/>
    <property type="gene ID" value="WBGene00003661"/>
    <property type="gene designation" value="nhr-71"/>
</dbReference>
<dbReference type="WormBase" id="K11E4.5b">
    <property type="protein sequence ID" value="CE37391"/>
    <property type="gene ID" value="WBGene00003661"/>
    <property type="gene designation" value="nhr-71"/>
</dbReference>
<dbReference type="eggNOG" id="KOG3575">
    <property type="taxonomic scope" value="Eukaryota"/>
</dbReference>
<dbReference type="InParanoid" id="Q9GTD4"/>
<dbReference type="OrthoDB" id="6159439at2759"/>
<dbReference type="PRO" id="PR:Q9GTD4"/>
<dbReference type="Proteomes" id="UP000001940">
    <property type="component" value="Chromosome X"/>
</dbReference>
<dbReference type="Bgee" id="WBGene00003661">
    <property type="expression patterns" value="Expressed in germ line (C elegans) and 4 other cell types or tissues"/>
</dbReference>
<dbReference type="GO" id="GO:0005634">
    <property type="term" value="C:nucleus"/>
    <property type="evidence" value="ECO:0000318"/>
    <property type="project" value="GO_Central"/>
</dbReference>
<dbReference type="GO" id="GO:0003700">
    <property type="term" value="F:DNA-binding transcription factor activity"/>
    <property type="evidence" value="ECO:0000318"/>
    <property type="project" value="GO_Central"/>
</dbReference>
<dbReference type="GO" id="GO:0000978">
    <property type="term" value="F:RNA polymerase II cis-regulatory region sequence-specific DNA binding"/>
    <property type="evidence" value="ECO:0007669"/>
    <property type="project" value="InterPro"/>
</dbReference>
<dbReference type="GO" id="GO:0008270">
    <property type="term" value="F:zinc ion binding"/>
    <property type="evidence" value="ECO:0007669"/>
    <property type="project" value="UniProtKB-KW"/>
</dbReference>
<dbReference type="GO" id="GO:0006357">
    <property type="term" value="P:regulation of transcription by RNA polymerase II"/>
    <property type="evidence" value="ECO:0000318"/>
    <property type="project" value="GO_Central"/>
</dbReference>
<dbReference type="CDD" id="cd06960">
    <property type="entry name" value="NR_DBD_HNF4A"/>
    <property type="match status" value="1"/>
</dbReference>
<dbReference type="FunFam" id="3.30.50.10:FF:000030">
    <property type="entry name" value="Nuclear Hormone Receptor family"/>
    <property type="match status" value="1"/>
</dbReference>
<dbReference type="Gene3D" id="3.30.50.10">
    <property type="entry name" value="Erythroid Transcription Factor GATA-1, subunit A"/>
    <property type="match status" value="1"/>
</dbReference>
<dbReference type="Gene3D" id="1.10.565.10">
    <property type="entry name" value="Retinoid X Receptor"/>
    <property type="match status" value="1"/>
</dbReference>
<dbReference type="InterPro" id="IPR049636">
    <property type="entry name" value="HNF4-like_DBD"/>
</dbReference>
<dbReference type="InterPro" id="IPR035500">
    <property type="entry name" value="NHR-like_dom_sf"/>
</dbReference>
<dbReference type="InterPro" id="IPR000536">
    <property type="entry name" value="Nucl_hrmn_rcpt_lig-bd"/>
</dbReference>
<dbReference type="InterPro" id="IPR001628">
    <property type="entry name" value="Znf_hrmn_rcpt"/>
</dbReference>
<dbReference type="InterPro" id="IPR013088">
    <property type="entry name" value="Znf_NHR/GATA"/>
</dbReference>
<dbReference type="PANTHER" id="PTHR46587">
    <property type="entry name" value="NUCLEAR HORMONE RECEPTOR FAMILY"/>
    <property type="match status" value="1"/>
</dbReference>
<dbReference type="PANTHER" id="PTHR46587:SF5">
    <property type="entry name" value="NUCLEAR HORMONE RECEPTOR FAMILY"/>
    <property type="match status" value="1"/>
</dbReference>
<dbReference type="Pfam" id="PF00104">
    <property type="entry name" value="Hormone_recep"/>
    <property type="match status" value="1"/>
</dbReference>
<dbReference type="Pfam" id="PF00105">
    <property type="entry name" value="zf-C4"/>
    <property type="match status" value="1"/>
</dbReference>
<dbReference type="PRINTS" id="PR00047">
    <property type="entry name" value="STROIDFINGER"/>
</dbReference>
<dbReference type="SMART" id="SM00430">
    <property type="entry name" value="HOLI"/>
    <property type="match status" value="1"/>
</dbReference>
<dbReference type="SMART" id="SM00399">
    <property type="entry name" value="ZnF_C4"/>
    <property type="match status" value="1"/>
</dbReference>
<dbReference type="SUPFAM" id="SSF57716">
    <property type="entry name" value="Glucocorticoid receptor-like (DNA-binding domain)"/>
    <property type="match status" value="1"/>
</dbReference>
<dbReference type="SUPFAM" id="SSF48508">
    <property type="entry name" value="Nuclear receptor ligand-binding domain"/>
    <property type="match status" value="1"/>
</dbReference>
<dbReference type="PROSITE" id="PS51843">
    <property type="entry name" value="NR_LBD"/>
    <property type="match status" value="1"/>
</dbReference>
<dbReference type="PROSITE" id="PS00031">
    <property type="entry name" value="NUCLEAR_REC_DBD_1"/>
    <property type="match status" value="1"/>
</dbReference>
<dbReference type="PROSITE" id="PS51030">
    <property type="entry name" value="NUCLEAR_REC_DBD_2"/>
    <property type="match status" value="1"/>
</dbReference>
<comment type="function">
    <text>Orphan nuclear receptor.</text>
</comment>
<comment type="subcellular location">
    <subcellularLocation>
        <location evidence="1">Nucleus</location>
    </subcellularLocation>
</comment>
<comment type="alternative products">
    <event type="alternative splicing"/>
    <isoform>
        <id>Q9GTD4-1</id>
        <name>a</name>
        <sequence type="displayed"/>
    </isoform>
    <isoform>
        <id>Q9GTD4-2</id>
        <name>b</name>
        <sequence type="described" ref="VSP_053633"/>
    </isoform>
</comment>
<comment type="similarity">
    <text evidence="4">Belongs to the nuclear hormone receptor family.</text>
</comment>
<comment type="sequence caution" evidence="4">
    <conflict type="erroneous initiation">
        <sequence resource="EMBL-CDS" id="CAA94160"/>
    </conflict>
    <text>Truncated N-terminus.</text>
</comment>
<comment type="sequence caution" evidence="4">
    <conflict type="erroneous initiation">
        <sequence resource="EMBL-CDS" id="CAH60769"/>
    </conflict>
    <text>Truncated N-terminus.</text>
</comment>
<reference key="1">
    <citation type="journal article" date="2005" name="J. Mol. Evol.">
        <title>Explosive lineage-specific expansion of the orphan nuclear receptor HNF4 in nematodes.</title>
        <authorList>
            <person name="Robinson-Rechavi M."/>
            <person name="Maina C.V."/>
            <person name="Gissendanner C.R."/>
            <person name="Laudet V."/>
            <person name="Sluder A."/>
        </authorList>
    </citation>
    <scope>NUCLEOTIDE SEQUENCE [MRNA]</scope>
</reference>
<reference key="2">
    <citation type="journal article" date="1998" name="Science">
        <title>Genome sequence of the nematode C. elegans: a platform for investigating biology.</title>
        <authorList>
            <consortium name="The C. elegans sequencing consortium"/>
        </authorList>
    </citation>
    <scope>NUCLEOTIDE SEQUENCE [LARGE SCALE GENOMIC DNA]</scope>
    <scope>ALTERNATIVE SPLICING</scope>
    <source>
        <strain>Bristol N2</strain>
    </source>
</reference>
<evidence type="ECO:0000255" key="1">
    <source>
        <dbReference type="PROSITE-ProRule" id="PRU00407"/>
    </source>
</evidence>
<evidence type="ECO:0000255" key="2">
    <source>
        <dbReference type="PROSITE-ProRule" id="PRU01189"/>
    </source>
</evidence>
<evidence type="ECO:0000256" key="3">
    <source>
        <dbReference type="SAM" id="MobiDB-lite"/>
    </source>
</evidence>
<evidence type="ECO:0000305" key="4"/>
<keyword id="KW-0025">Alternative splicing</keyword>
<keyword id="KW-0238">DNA-binding</keyword>
<keyword id="KW-0479">Metal-binding</keyword>
<keyword id="KW-0539">Nucleus</keyword>
<keyword id="KW-0675">Receptor</keyword>
<keyword id="KW-1185">Reference proteome</keyword>
<keyword id="KW-0804">Transcription</keyword>
<keyword id="KW-0805">Transcription regulation</keyword>
<keyword id="KW-0862">Zinc</keyword>
<keyword id="KW-0863">Zinc-finger</keyword>
<sequence length="579" mass="66691">MMKDEYNSQECMVCSAPADGLHYGAISCRSCNAFFRRTVVEKAEYRCKHTNTCLIDPDGRCACRSCRFTKCIEAGMKIGAVQPRRDPTGSQKERRKRAGGVGEMMSMNNSPLERNGNSFSSDGPTSNSFIVDAIRTDYGFATPRRISTDYSNSPDRYRKYVKIELDDEPIPSTSSAPEKQSCQSSPNDDEQQEFNHLVYAFGEHQRMMQLSFSTFEQFLDEHSNGPKLRRMDPLDVSKLSAVELTGLLYWIEKQQPYGELPVEDRSSLLKRYSVRKLSLDHFYSASKHPEYCARGEFVMNNFTFVPADRTGFELPDDDPHQIQAKREHCRTFAPTFNRFWKNVIRPFVLMKVNDAEVVFLHIMLLWSVTNNEHVTEDTRKVMKQRRDWAMNRLFDWYNEHGTSDPPLRFGQMILLLGEIELICDMHCQDFQVAKLFEFCDMSKFWYETLCYAPCNTNVLKFDPNLLENLKRFTAISVMENNGGLRPFVKTEIKQDPVLYSSPEVIAPESCYNDYQTVDIPVDCNPHTEPVSMDPNLANIDPAVLVFNAHMLPSVMAPLPDDADYHRPQLYHTQSEEVMT</sequence>
<name>NHR71_CAEEL</name>
<organism>
    <name type="scientific">Caenorhabditis elegans</name>
    <dbReference type="NCBI Taxonomy" id="6239"/>
    <lineage>
        <taxon>Eukaryota</taxon>
        <taxon>Metazoa</taxon>
        <taxon>Ecdysozoa</taxon>
        <taxon>Nematoda</taxon>
        <taxon>Chromadorea</taxon>
        <taxon>Rhabditida</taxon>
        <taxon>Rhabditina</taxon>
        <taxon>Rhabditomorpha</taxon>
        <taxon>Rhabditoidea</taxon>
        <taxon>Rhabditidae</taxon>
        <taxon>Peloderinae</taxon>
        <taxon>Caenorhabditis</taxon>
    </lineage>
</organism>
<protein>
    <recommendedName>
        <fullName>Nuclear hormone receptor family member nhr-71</fullName>
    </recommendedName>
</protein>
<feature type="chain" id="PRO_0000053796" description="Nuclear hormone receptor family member nhr-71">
    <location>
        <begin position="1"/>
        <end position="579"/>
    </location>
</feature>
<feature type="domain" description="NR LBD" evidence="2">
    <location>
        <begin position="189"/>
        <end position="452"/>
    </location>
</feature>
<feature type="DNA-binding region" description="Nuclear receptor" evidence="1">
    <location>
        <begin position="8"/>
        <end position="83"/>
    </location>
</feature>
<feature type="zinc finger region" description="NR C4-type" evidence="1">
    <location>
        <begin position="11"/>
        <end position="31"/>
    </location>
</feature>
<feature type="zinc finger region" description="NR C4-type" evidence="1">
    <location>
        <begin position="47"/>
        <end position="71"/>
    </location>
</feature>
<feature type="region of interest" description="Disordered" evidence="3">
    <location>
        <begin position="82"/>
        <end position="124"/>
    </location>
</feature>
<feature type="region of interest" description="Disordered" evidence="3">
    <location>
        <begin position="168"/>
        <end position="189"/>
    </location>
</feature>
<feature type="compositionally biased region" description="Polar residues" evidence="3">
    <location>
        <begin position="106"/>
        <end position="124"/>
    </location>
</feature>
<feature type="compositionally biased region" description="Polar residues" evidence="3">
    <location>
        <begin position="171"/>
        <end position="186"/>
    </location>
</feature>
<feature type="splice variant" id="VSP_053633" description="In isoform b." evidence="4">
    <original>A</original>
    <variation>ALFQ</variation>
    <location>
        <position position="43"/>
    </location>
</feature>
<feature type="sequence conflict" description="In Ref. 1; AAG15173." evidence="4" ref="1">
    <original>R</original>
    <variation>E</variation>
    <location>
        <position position="330"/>
    </location>
</feature>
<feature type="sequence conflict" description="In Ref. 1; AAG15174." evidence="4" ref="1">
    <original>L</original>
    <variation>F</variation>
    <location>
        <position position="421"/>
    </location>
</feature>
<accession>Q9GTD4</accession>
<accession>G5EEW8</accession>
<accession>Q9GTD5</accession>
<accession>Q9TVX9</accession>